<reference key="1">
    <citation type="journal article" date="2008" name="DNA Res.">
        <title>Complete genome sequence and comparative analysis of the wild-type commensal Escherichia coli strain SE11 isolated from a healthy adult.</title>
        <authorList>
            <person name="Oshima K."/>
            <person name="Toh H."/>
            <person name="Ogura Y."/>
            <person name="Sasamoto H."/>
            <person name="Morita H."/>
            <person name="Park S.-H."/>
            <person name="Ooka T."/>
            <person name="Iyoda S."/>
            <person name="Taylor T.D."/>
            <person name="Hayashi T."/>
            <person name="Itoh K."/>
            <person name="Hattori M."/>
        </authorList>
    </citation>
    <scope>NUCLEOTIDE SEQUENCE [LARGE SCALE GENOMIC DNA]</scope>
    <source>
        <strain>SE11</strain>
    </source>
</reference>
<evidence type="ECO:0000255" key="1">
    <source>
        <dbReference type="HAMAP-Rule" id="MF_01333"/>
    </source>
</evidence>
<evidence type="ECO:0000305" key="2"/>
<accession>B6I222</accession>
<gene>
    <name evidence="1" type="primary">rplE</name>
    <name type="ordered locus">ECSE_3583</name>
</gene>
<organism>
    <name type="scientific">Escherichia coli (strain SE11)</name>
    <dbReference type="NCBI Taxonomy" id="409438"/>
    <lineage>
        <taxon>Bacteria</taxon>
        <taxon>Pseudomonadati</taxon>
        <taxon>Pseudomonadota</taxon>
        <taxon>Gammaproteobacteria</taxon>
        <taxon>Enterobacterales</taxon>
        <taxon>Enterobacteriaceae</taxon>
        <taxon>Escherichia</taxon>
    </lineage>
</organism>
<protein>
    <recommendedName>
        <fullName evidence="1">Large ribosomal subunit protein uL5</fullName>
    </recommendedName>
    <alternativeName>
        <fullName evidence="2">50S ribosomal protein L5</fullName>
    </alternativeName>
</protein>
<feature type="chain" id="PRO_1000142399" description="Large ribosomal subunit protein uL5">
    <location>
        <begin position="1"/>
        <end position="179"/>
    </location>
</feature>
<feature type="modified residue" description="N6-acetyllysine" evidence="1">
    <location>
        <position position="3"/>
    </location>
</feature>
<keyword id="KW-0007">Acetylation</keyword>
<keyword id="KW-0687">Ribonucleoprotein</keyword>
<keyword id="KW-0689">Ribosomal protein</keyword>
<keyword id="KW-0694">RNA-binding</keyword>
<keyword id="KW-0699">rRNA-binding</keyword>
<keyword id="KW-0820">tRNA-binding</keyword>
<name>RL5_ECOSE</name>
<proteinExistence type="inferred from homology"/>
<dbReference type="EMBL" id="AP009240">
    <property type="protein sequence ID" value="BAG79107.1"/>
    <property type="molecule type" value="Genomic_DNA"/>
</dbReference>
<dbReference type="RefSeq" id="WP_001096200.1">
    <property type="nucleotide sequence ID" value="NC_011415.1"/>
</dbReference>
<dbReference type="SMR" id="B6I222"/>
<dbReference type="GeneID" id="93778679"/>
<dbReference type="KEGG" id="ecy:ECSE_3583"/>
<dbReference type="HOGENOM" id="CLU_061015_2_1_6"/>
<dbReference type="Proteomes" id="UP000008199">
    <property type="component" value="Chromosome"/>
</dbReference>
<dbReference type="GO" id="GO:1990904">
    <property type="term" value="C:ribonucleoprotein complex"/>
    <property type="evidence" value="ECO:0007669"/>
    <property type="project" value="UniProtKB-KW"/>
</dbReference>
<dbReference type="GO" id="GO:0005840">
    <property type="term" value="C:ribosome"/>
    <property type="evidence" value="ECO:0007669"/>
    <property type="project" value="UniProtKB-KW"/>
</dbReference>
<dbReference type="GO" id="GO:0019843">
    <property type="term" value="F:rRNA binding"/>
    <property type="evidence" value="ECO:0007669"/>
    <property type="project" value="UniProtKB-UniRule"/>
</dbReference>
<dbReference type="GO" id="GO:0003735">
    <property type="term" value="F:structural constituent of ribosome"/>
    <property type="evidence" value="ECO:0007669"/>
    <property type="project" value="InterPro"/>
</dbReference>
<dbReference type="GO" id="GO:0000049">
    <property type="term" value="F:tRNA binding"/>
    <property type="evidence" value="ECO:0007669"/>
    <property type="project" value="UniProtKB-UniRule"/>
</dbReference>
<dbReference type="GO" id="GO:0006412">
    <property type="term" value="P:translation"/>
    <property type="evidence" value="ECO:0007669"/>
    <property type="project" value="UniProtKB-UniRule"/>
</dbReference>
<dbReference type="FunFam" id="3.30.1440.10:FF:000001">
    <property type="entry name" value="50S ribosomal protein L5"/>
    <property type="match status" value="1"/>
</dbReference>
<dbReference type="Gene3D" id="3.30.1440.10">
    <property type="match status" value="1"/>
</dbReference>
<dbReference type="HAMAP" id="MF_01333_B">
    <property type="entry name" value="Ribosomal_uL5_B"/>
    <property type="match status" value="1"/>
</dbReference>
<dbReference type="InterPro" id="IPR002132">
    <property type="entry name" value="Ribosomal_uL5"/>
</dbReference>
<dbReference type="InterPro" id="IPR020930">
    <property type="entry name" value="Ribosomal_uL5_bac-type"/>
</dbReference>
<dbReference type="InterPro" id="IPR031309">
    <property type="entry name" value="Ribosomal_uL5_C"/>
</dbReference>
<dbReference type="InterPro" id="IPR020929">
    <property type="entry name" value="Ribosomal_uL5_CS"/>
</dbReference>
<dbReference type="InterPro" id="IPR022803">
    <property type="entry name" value="Ribosomal_uL5_dom_sf"/>
</dbReference>
<dbReference type="InterPro" id="IPR031310">
    <property type="entry name" value="Ribosomal_uL5_N"/>
</dbReference>
<dbReference type="NCBIfam" id="NF000585">
    <property type="entry name" value="PRK00010.1"/>
    <property type="match status" value="1"/>
</dbReference>
<dbReference type="PANTHER" id="PTHR11994">
    <property type="entry name" value="60S RIBOSOMAL PROTEIN L11-RELATED"/>
    <property type="match status" value="1"/>
</dbReference>
<dbReference type="Pfam" id="PF00281">
    <property type="entry name" value="Ribosomal_L5"/>
    <property type="match status" value="1"/>
</dbReference>
<dbReference type="Pfam" id="PF00673">
    <property type="entry name" value="Ribosomal_L5_C"/>
    <property type="match status" value="1"/>
</dbReference>
<dbReference type="PIRSF" id="PIRSF002161">
    <property type="entry name" value="Ribosomal_L5"/>
    <property type="match status" value="1"/>
</dbReference>
<dbReference type="SUPFAM" id="SSF55282">
    <property type="entry name" value="RL5-like"/>
    <property type="match status" value="1"/>
</dbReference>
<dbReference type="PROSITE" id="PS00358">
    <property type="entry name" value="RIBOSOMAL_L5"/>
    <property type="match status" value="1"/>
</dbReference>
<sequence>MAKLHDYYKDEVVKKLMTEFNYNSVMQVPRVEKITLNMGVGEAIADKKLLDNAAADLAAISGQKPLITKARKSVAGFKIRQGYPIGCKVTLRGERMWEFFERLITIAVPRIRDFRGLSAKSFDGRGNYSMGVREQIIFPEIDYDKVDRVRGLDITITTTAKSDEEGRALLAAFDFPFRK</sequence>
<comment type="function">
    <text evidence="1">This is one of the proteins that bind and probably mediate the attachment of the 5S RNA into the large ribosomal subunit, where it forms part of the central protuberance. In the 70S ribosome it contacts protein S13 of the 30S subunit (bridge B1b), connecting the 2 subunits; this bridge is implicated in subunit movement. Contacts the P site tRNA; the 5S rRNA and some of its associated proteins might help stabilize positioning of ribosome-bound tRNAs.</text>
</comment>
<comment type="subunit">
    <text evidence="1">Part of the 50S ribosomal subunit; part of the 5S rRNA/L5/L18/L25 subcomplex. Contacts the 5S rRNA and the P site tRNA. Forms a bridge to the 30S subunit in the 70S ribosome.</text>
</comment>
<comment type="similarity">
    <text evidence="1">Belongs to the universal ribosomal protein uL5 family.</text>
</comment>